<organism>
    <name type="scientific">Tamias merriami</name>
    <name type="common">Merriam's chipmunk</name>
    <name type="synonym">Neotamias merriami</name>
    <dbReference type="NCBI Taxonomy" id="123787"/>
    <lineage>
        <taxon>Eukaryota</taxon>
        <taxon>Metazoa</taxon>
        <taxon>Chordata</taxon>
        <taxon>Craniata</taxon>
        <taxon>Vertebrata</taxon>
        <taxon>Euteleostomi</taxon>
        <taxon>Mammalia</taxon>
        <taxon>Eutheria</taxon>
        <taxon>Euarchontoglires</taxon>
        <taxon>Glires</taxon>
        <taxon>Rodentia</taxon>
        <taxon>Sciuromorpha</taxon>
        <taxon>Sciuridae</taxon>
        <taxon>Xerinae</taxon>
        <taxon>Marmotini</taxon>
        <taxon>Tamias</taxon>
    </lineage>
</organism>
<sequence>VHLTAEEKSAVAALWGKVNTDEVGGEALGRLLVVYPWTQRFFDSFGDLSSASAVMSNPKVKAHGKKVFDSFSNGLKHLDNLKGTFASLSELHCDKLHVDPENFKLLGNVLVVVLAHHLGKEFTPQVQSAFQKVVTGVANALAHKYH</sequence>
<comment type="function">
    <text evidence="7">Involved in oxygen transport from the lung to the various peripheral tissues.</text>
</comment>
<comment type="subunit">
    <text evidence="7">Heterotetramer of two alpha chains and two beta chains.</text>
</comment>
<comment type="tissue specificity">
    <text evidence="7">Red blood cells.</text>
</comment>
<comment type="similarity">
    <text evidence="4">Belongs to the globin family.</text>
</comment>
<feature type="chain" id="PRO_0000415600" description="Hemoglobin subunit beta">
    <location>
        <begin position="1"/>
        <end position="146"/>
    </location>
</feature>
<feature type="domain" description="Globin" evidence="4">
    <location>
        <begin position="2"/>
        <end position="146"/>
    </location>
</feature>
<feature type="binding site" description="distal binding residue" evidence="1 4">
    <location>
        <position position="63"/>
    </location>
    <ligand>
        <name>heme b</name>
        <dbReference type="ChEBI" id="CHEBI:60344"/>
    </ligand>
    <ligandPart>
        <name>Fe</name>
        <dbReference type="ChEBI" id="CHEBI:18248"/>
    </ligandPart>
</feature>
<feature type="binding site" description="proximal binding residue" evidence="1 4">
    <location>
        <position position="92"/>
    </location>
    <ligand>
        <name>heme b</name>
        <dbReference type="ChEBI" id="CHEBI:60344"/>
    </ligand>
    <ligandPart>
        <name>Fe</name>
        <dbReference type="ChEBI" id="CHEBI:18248"/>
    </ligandPart>
</feature>
<feature type="modified residue" description="N-acetylvaline" evidence="2">
    <location>
        <position position="1"/>
    </location>
</feature>
<feature type="modified residue" description="Phosphoserine" evidence="3">
    <location>
        <position position="44"/>
    </location>
</feature>
<feature type="modified residue" description="N6-acetyllysine" evidence="3">
    <location>
        <position position="59"/>
    </location>
</feature>
<feature type="modified residue" description="N6-acetyllysine" evidence="3">
    <location>
        <position position="82"/>
    </location>
</feature>
<feature type="modified residue" description="S-nitrosocysteine" evidence="3">
    <location>
        <position position="93"/>
    </location>
</feature>
<feature type="modified residue" description="N6-acetyllysine" evidence="3">
    <location>
        <position position="144"/>
    </location>
</feature>
<feature type="unsure residue" description="L or I" evidence="5">
    <location>
        <position position="3"/>
    </location>
</feature>
<feature type="unsure residue" description="L or I" evidence="5">
    <location>
        <position position="14"/>
    </location>
</feature>
<feature type="unsure residue" description="L or I" evidence="5">
    <location>
        <position position="28"/>
    </location>
</feature>
<feature type="unsure residue" description="L or I" evidence="5">
    <location>
        <position position="31"/>
    </location>
</feature>
<feature type="unsure residue" description="L or I" evidence="5">
    <location>
        <position position="32"/>
    </location>
</feature>
<feature type="unsure residue" description="L or I" evidence="5">
    <location>
        <position position="48"/>
    </location>
</feature>
<feature type="unsure residue" description="L or I" evidence="5">
    <location>
        <position position="75"/>
    </location>
</feature>
<feature type="unsure residue" description="L or I" evidence="5">
    <location>
        <position position="78"/>
    </location>
</feature>
<feature type="unsure residue" description="L or I" evidence="5">
    <location>
        <position position="81"/>
    </location>
</feature>
<feature type="unsure residue" description="L or I" evidence="5">
    <location>
        <position position="88"/>
    </location>
</feature>
<feature type="unsure residue" description="L or I" evidence="5">
    <location>
        <position position="91"/>
    </location>
</feature>
<feature type="unsure residue" description="L or I" evidence="5">
    <location>
        <position position="96"/>
    </location>
</feature>
<feature type="unsure residue" description="L or I" evidence="5">
    <location>
        <position position="105"/>
    </location>
</feature>
<feature type="unsure residue" description="L or I" evidence="5">
    <location>
        <position position="106"/>
    </location>
</feature>
<feature type="unsure residue" description="L or I" evidence="5">
    <location>
        <position position="110"/>
    </location>
</feature>
<feature type="unsure residue" description="L or I" evidence="5">
    <location>
        <position position="114"/>
    </location>
</feature>
<feature type="unsure residue" description="L or I" evidence="5">
    <location>
        <position position="118"/>
    </location>
</feature>
<feature type="unsure residue" description="L or I" evidence="5">
    <location>
        <position position="141"/>
    </location>
</feature>
<accession>B3EWC8</accession>
<proteinExistence type="evidence at protein level"/>
<name>HBB_TAMMR</name>
<protein>
    <recommendedName>
        <fullName evidence="6">Hemoglobin subunit beta</fullName>
    </recommendedName>
</protein>
<dbReference type="SMR" id="B3EWC8"/>
<dbReference type="GO" id="GO:0072562">
    <property type="term" value="C:blood microparticle"/>
    <property type="evidence" value="ECO:0007669"/>
    <property type="project" value="TreeGrafter"/>
</dbReference>
<dbReference type="GO" id="GO:0031838">
    <property type="term" value="C:haptoglobin-hemoglobin complex"/>
    <property type="evidence" value="ECO:0007669"/>
    <property type="project" value="TreeGrafter"/>
</dbReference>
<dbReference type="GO" id="GO:0005833">
    <property type="term" value="C:hemoglobin complex"/>
    <property type="evidence" value="ECO:0007669"/>
    <property type="project" value="InterPro"/>
</dbReference>
<dbReference type="GO" id="GO:0031720">
    <property type="term" value="F:haptoglobin binding"/>
    <property type="evidence" value="ECO:0007669"/>
    <property type="project" value="TreeGrafter"/>
</dbReference>
<dbReference type="GO" id="GO:0020037">
    <property type="term" value="F:heme binding"/>
    <property type="evidence" value="ECO:0007669"/>
    <property type="project" value="InterPro"/>
</dbReference>
<dbReference type="GO" id="GO:0031721">
    <property type="term" value="F:hemoglobin alpha binding"/>
    <property type="evidence" value="ECO:0007669"/>
    <property type="project" value="TreeGrafter"/>
</dbReference>
<dbReference type="GO" id="GO:0046872">
    <property type="term" value="F:metal ion binding"/>
    <property type="evidence" value="ECO:0007669"/>
    <property type="project" value="UniProtKB-KW"/>
</dbReference>
<dbReference type="GO" id="GO:0043177">
    <property type="term" value="F:organic acid binding"/>
    <property type="evidence" value="ECO:0007669"/>
    <property type="project" value="TreeGrafter"/>
</dbReference>
<dbReference type="GO" id="GO:0019825">
    <property type="term" value="F:oxygen binding"/>
    <property type="evidence" value="ECO:0007669"/>
    <property type="project" value="InterPro"/>
</dbReference>
<dbReference type="GO" id="GO:0005344">
    <property type="term" value="F:oxygen carrier activity"/>
    <property type="evidence" value="ECO:0007669"/>
    <property type="project" value="UniProtKB-KW"/>
</dbReference>
<dbReference type="GO" id="GO:0004601">
    <property type="term" value="F:peroxidase activity"/>
    <property type="evidence" value="ECO:0007669"/>
    <property type="project" value="TreeGrafter"/>
</dbReference>
<dbReference type="GO" id="GO:0042744">
    <property type="term" value="P:hydrogen peroxide catabolic process"/>
    <property type="evidence" value="ECO:0007669"/>
    <property type="project" value="TreeGrafter"/>
</dbReference>
<dbReference type="CDD" id="cd08925">
    <property type="entry name" value="Hb-beta-like"/>
    <property type="match status" value="1"/>
</dbReference>
<dbReference type="FunFam" id="1.10.490.10:FF:000001">
    <property type="entry name" value="Hemoglobin subunit beta"/>
    <property type="match status" value="1"/>
</dbReference>
<dbReference type="Gene3D" id="1.10.490.10">
    <property type="entry name" value="Globins"/>
    <property type="match status" value="1"/>
</dbReference>
<dbReference type="InterPro" id="IPR000971">
    <property type="entry name" value="Globin"/>
</dbReference>
<dbReference type="InterPro" id="IPR009050">
    <property type="entry name" value="Globin-like_sf"/>
</dbReference>
<dbReference type="InterPro" id="IPR012292">
    <property type="entry name" value="Globin/Proto"/>
</dbReference>
<dbReference type="InterPro" id="IPR002337">
    <property type="entry name" value="Hemoglobin_b"/>
</dbReference>
<dbReference type="InterPro" id="IPR050056">
    <property type="entry name" value="Hemoglobin_oxygen_transport"/>
</dbReference>
<dbReference type="PANTHER" id="PTHR11442">
    <property type="entry name" value="HEMOGLOBIN FAMILY MEMBER"/>
    <property type="match status" value="1"/>
</dbReference>
<dbReference type="PANTHER" id="PTHR11442:SF42">
    <property type="entry name" value="HEMOGLOBIN SUBUNIT BETA"/>
    <property type="match status" value="1"/>
</dbReference>
<dbReference type="Pfam" id="PF00042">
    <property type="entry name" value="Globin"/>
    <property type="match status" value="1"/>
</dbReference>
<dbReference type="PRINTS" id="PR00814">
    <property type="entry name" value="BETAHAEM"/>
</dbReference>
<dbReference type="SUPFAM" id="SSF46458">
    <property type="entry name" value="Globin-like"/>
    <property type="match status" value="1"/>
</dbReference>
<dbReference type="PROSITE" id="PS01033">
    <property type="entry name" value="GLOBIN"/>
    <property type="match status" value="1"/>
</dbReference>
<evidence type="ECO:0000250" key="1">
    <source>
        <dbReference type="UniProtKB" id="P02070"/>
    </source>
</evidence>
<evidence type="ECO:0000250" key="2">
    <source>
        <dbReference type="UniProtKB" id="P02086"/>
    </source>
</evidence>
<evidence type="ECO:0000250" key="3">
    <source>
        <dbReference type="UniProtKB" id="P68871"/>
    </source>
</evidence>
<evidence type="ECO:0000255" key="4">
    <source>
        <dbReference type="PROSITE-ProRule" id="PRU00238"/>
    </source>
</evidence>
<evidence type="ECO:0000269" key="5">
    <source>
    </source>
</evidence>
<evidence type="ECO:0000303" key="6">
    <source>
    </source>
</evidence>
<evidence type="ECO:0000305" key="7"/>
<reference evidence="7" key="1">
    <citation type="journal article" date="2012" name="Biol. Chem.">
        <title>Development of a host blood meal database: de novo sequencing of hemoglobin from nine small mammals using mass spectrometry.</title>
        <authorList>
            <person name="Laskay U.A."/>
            <person name="Burg J."/>
            <person name="Kaleta E.J."/>
            <person name="Vilcins I.M."/>
            <person name="Telford Iii S.R."/>
            <person name="Barbour A.G."/>
            <person name="Wysocki V.H."/>
        </authorList>
    </citation>
    <scope>PROTEIN SEQUENCE</scope>
    <source>
        <tissue evidence="5">Erythrocyte</tissue>
    </source>
</reference>
<keyword id="KW-0007">Acetylation</keyword>
<keyword id="KW-0903">Direct protein sequencing</keyword>
<keyword id="KW-0349">Heme</keyword>
<keyword id="KW-0408">Iron</keyword>
<keyword id="KW-0479">Metal-binding</keyword>
<keyword id="KW-0561">Oxygen transport</keyword>
<keyword id="KW-0597">Phosphoprotein</keyword>
<keyword id="KW-0702">S-nitrosylation</keyword>
<keyword id="KW-0813">Transport</keyword>